<comment type="function">
    <text evidence="1">Part of the ABC transporter complex LptBFG involved in the translocation of lipopolysaccharide (LPS) from the inner membrane to the outer membrane.</text>
</comment>
<comment type="subunit">
    <text evidence="1">Component of the lipopolysaccharide transport and assembly complex. The LptBFG transporter is composed of two ATP-binding proteins (LptB) and two transmembrane proteins (LptF and LptG) (By similarity).</text>
</comment>
<comment type="subcellular location">
    <subcellularLocation>
        <location evidence="1">Cell inner membrane</location>
        <topology evidence="1">Multi-pass membrane protein</topology>
    </subcellularLocation>
</comment>
<comment type="similarity">
    <text evidence="3">Belongs to the LptF/LptG family.</text>
</comment>
<comment type="sequence caution" evidence="3">
    <conflict type="erroneous initiation">
        <sequence resource="EMBL-CDS" id="AAN83785"/>
    </conflict>
</comment>
<protein>
    <recommendedName>
        <fullName>Lipopolysaccharide export system permease protein LptG</fullName>
    </recommendedName>
</protein>
<dbReference type="EMBL" id="AE014075">
    <property type="protein sequence ID" value="AAN83785.1"/>
    <property type="status" value="ALT_INIT"/>
    <property type="molecule type" value="Genomic_DNA"/>
</dbReference>
<dbReference type="RefSeq" id="WP_001295681.1">
    <property type="nucleotide sequence ID" value="NZ_CP051263.1"/>
</dbReference>
<dbReference type="SMR" id="P0ADC7"/>
<dbReference type="STRING" id="199310.c5363"/>
<dbReference type="GeneID" id="75203517"/>
<dbReference type="KEGG" id="ecc:c5363"/>
<dbReference type="eggNOG" id="COG0795">
    <property type="taxonomic scope" value="Bacteria"/>
</dbReference>
<dbReference type="HOGENOM" id="CLU_028799_1_1_6"/>
<dbReference type="Proteomes" id="UP000001410">
    <property type="component" value="Chromosome"/>
</dbReference>
<dbReference type="GO" id="GO:0043190">
    <property type="term" value="C:ATP-binding cassette (ABC) transporter complex"/>
    <property type="evidence" value="ECO:0007669"/>
    <property type="project" value="InterPro"/>
</dbReference>
<dbReference type="GO" id="GO:0015920">
    <property type="term" value="P:lipopolysaccharide transport"/>
    <property type="evidence" value="ECO:0007669"/>
    <property type="project" value="TreeGrafter"/>
</dbReference>
<dbReference type="GO" id="GO:0055085">
    <property type="term" value="P:transmembrane transport"/>
    <property type="evidence" value="ECO:0007669"/>
    <property type="project" value="InterPro"/>
</dbReference>
<dbReference type="InterPro" id="IPR030923">
    <property type="entry name" value="LptG"/>
</dbReference>
<dbReference type="InterPro" id="IPR005495">
    <property type="entry name" value="LptG/LptF_permease"/>
</dbReference>
<dbReference type="NCBIfam" id="TIGR04408">
    <property type="entry name" value="LptG_lptG"/>
    <property type="match status" value="1"/>
</dbReference>
<dbReference type="PANTHER" id="PTHR33529:SF2">
    <property type="entry name" value="LIPOPOLYSACCHARIDE EXPORT SYSTEM PERMEASE PROTEIN LPTG"/>
    <property type="match status" value="1"/>
</dbReference>
<dbReference type="PANTHER" id="PTHR33529">
    <property type="entry name" value="SLR0882 PROTEIN-RELATED"/>
    <property type="match status" value="1"/>
</dbReference>
<dbReference type="Pfam" id="PF03739">
    <property type="entry name" value="LptF_LptG"/>
    <property type="match status" value="1"/>
</dbReference>
<reference key="1">
    <citation type="journal article" date="2002" name="Proc. Natl. Acad. Sci. U.S.A.">
        <title>Extensive mosaic structure revealed by the complete genome sequence of uropathogenic Escherichia coli.</title>
        <authorList>
            <person name="Welch R.A."/>
            <person name="Burland V."/>
            <person name="Plunkett G. III"/>
            <person name="Redford P."/>
            <person name="Roesch P."/>
            <person name="Rasko D."/>
            <person name="Buckles E.L."/>
            <person name="Liou S.-R."/>
            <person name="Boutin A."/>
            <person name="Hackett J."/>
            <person name="Stroud D."/>
            <person name="Mayhew G.F."/>
            <person name="Rose D.J."/>
            <person name="Zhou S."/>
            <person name="Schwartz D.C."/>
            <person name="Perna N.T."/>
            <person name="Mobley H.L.T."/>
            <person name="Donnenberg M.S."/>
            <person name="Blattner F.R."/>
        </authorList>
    </citation>
    <scope>NUCLEOTIDE SEQUENCE [LARGE SCALE GENOMIC DNA]</scope>
    <source>
        <strain>CFT073 / ATCC 700928 / UPEC</strain>
    </source>
</reference>
<evidence type="ECO:0000250" key="1"/>
<evidence type="ECO:0000255" key="2"/>
<evidence type="ECO:0000305" key="3"/>
<sequence>MQPFGVLDRYIGKTIFTTIMMTLFMLVSLSGIIKFVDQLKKAGQGSYDALGAGMYTLLSVPKDVQIFFPMAALLGALLGLGMLAQRSELVVMQASGFTRMQVALSVMKTAIPLVLLTMAIGEWVAPQGEQMARNYRAQAMYGGSLLSTQQGLWAKDGNNFVYIERVKGDEELGGISIYAFNENRRLQSVRYAATAKFDPEHKVWRLSQVDESDLTNPKQITGSQTVSGTWKTNLTPDKLGVVALDPDALSISGLHNYVKYLKSSGQDAGRYQLNMWSKIFQPLSVAVMMLMALSFIFGPLRSVPMGVRVVTGISFGFVFYVLDQIFGPLTLVYGIPPIIGALLPSASFFLISLWLLMRKS</sequence>
<gene>
    <name type="primary">lptG</name>
    <name type="ordered locus">c5363</name>
</gene>
<organism>
    <name type="scientific">Escherichia coli O6:H1 (strain CFT073 / ATCC 700928 / UPEC)</name>
    <dbReference type="NCBI Taxonomy" id="199310"/>
    <lineage>
        <taxon>Bacteria</taxon>
        <taxon>Pseudomonadati</taxon>
        <taxon>Pseudomonadota</taxon>
        <taxon>Gammaproteobacteria</taxon>
        <taxon>Enterobacterales</taxon>
        <taxon>Enterobacteriaceae</taxon>
        <taxon>Escherichia</taxon>
    </lineage>
</organism>
<keyword id="KW-0997">Cell inner membrane</keyword>
<keyword id="KW-1003">Cell membrane</keyword>
<keyword id="KW-0472">Membrane</keyword>
<keyword id="KW-1185">Reference proteome</keyword>
<keyword id="KW-0812">Transmembrane</keyword>
<keyword id="KW-1133">Transmembrane helix</keyword>
<keyword id="KW-0813">Transport</keyword>
<feature type="chain" id="PRO_0000169777" description="Lipopolysaccharide export system permease protein LptG">
    <location>
        <begin position="1"/>
        <end position="360"/>
    </location>
</feature>
<feature type="topological domain" description="Cytoplasmic" evidence="2">
    <location>
        <begin position="1"/>
        <end position="14"/>
    </location>
</feature>
<feature type="transmembrane region" description="Helical" evidence="2">
    <location>
        <begin position="15"/>
        <end position="35"/>
    </location>
</feature>
<feature type="topological domain" description="Periplasmic" evidence="2">
    <location>
        <begin position="36"/>
        <end position="63"/>
    </location>
</feature>
<feature type="transmembrane region" description="Helical" evidence="2">
    <location>
        <begin position="64"/>
        <end position="84"/>
    </location>
</feature>
<feature type="topological domain" description="Cytoplasmic" evidence="2">
    <location>
        <begin position="85"/>
        <end position="103"/>
    </location>
</feature>
<feature type="transmembrane region" description="Helical" evidence="2">
    <location>
        <begin position="104"/>
        <end position="124"/>
    </location>
</feature>
<feature type="topological domain" description="Periplasmic" evidence="2">
    <location>
        <begin position="125"/>
        <end position="278"/>
    </location>
</feature>
<feature type="transmembrane region" description="Helical" evidence="2">
    <location>
        <begin position="279"/>
        <end position="299"/>
    </location>
</feature>
<feature type="topological domain" description="Cytoplasmic" evidence="2">
    <location>
        <begin position="300"/>
        <end position="314"/>
    </location>
</feature>
<feature type="transmembrane region" description="Helical" evidence="2">
    <location>
        <begin position="315"/>
        <end position="335"/>
    </location>
</feature>
<feature type="topological domain" description="Periplasmic" evidence="2">
    <location>
        <position position="336"/>
    </location>
</feature>
<feature type="transmembrane region" description="Helical" evidence="2">
    <location>
        <begin position="337"/>
        <end position="357"/>
    </location>
</feature>
<feature type="topological domain" description="Cytoplasmic" evidence="2">
    <location>
        <begin position="358"/>
        <end position="360"/>
    </location>
</feature>
<accession>P0ADC7</accession>
<accession>P39341</accession>
<proteinExistence type="inferred from homology"/>
<name>LPTG_ECOL6</name>